<feature type="chain" id="PRO_1000074527" description="UDP-N-acetylenolpyruvoylglucosamine reductase">
    <location>
        <begin position="1"/>
        <end position="307"/>
    </location>
</feature>
<feature type="domain" description="FAD-binding PCMH-type" evidence="1">
    <location>
        <begin position="33"/>
        <end position="197"/>
    </location>
</feature>
<feature type="active site" evidence="1">
    <location>
        <position position="176"/>
    </location>
</feature>
<feature type="active site" description="Proton donor" evidence="1">
    <location>
        <position position="226"/>
    </location>
</feature>
<feature type="active site" evidence="1">
    <location>
        <position position="296"/>
    </location>
</feature>
<reference key="1">
    <citation type="submission" date="2007-06" db="EMBL/GenBank/DDBJ databases">
        <title>Complete sequence of chromosome of Staphylococcus aureus subsp. aureus JH1.</title>
        <authorList>
            <consortium name="US DOE Joint Genome Institute"/>
            <person name="Copeland A."/>
            <person name="Lucas S."/>
            <person name="Lapidus A."/>
            <person name="Barry K."/>
            <person name="Detter J.C."/>
            <person name="Glavina del Rio T."/>
            <person name="Hammon N."/>
            <person name="Israni S."/>
            <person name="Dalin E."/>
            <person name="Tice H."/>
            <person name="Pitluck S."/>
            <person name="Chain P."/>
            <person name="Malfatti S."/>
            <person name="Shin M."/>
            <person name="Vergez L."/>
            <person name="Schmutz J."/>
            <person name="Larimer F."/>
            <person name="Land M."/>
            <person name="Hauser L."/>
            <person name="Kyrpides N."/>
            <person name="Ivanova N."/>
            <person name="Tomasz A."/>
            <person name="Richardson P."/>
        </authorList>
    </citation>
    <scope>NUCLEOTIDE SEQUENCE [LARGE SCALE GENOMIC DNA]</scope>
    <source>
        <strain>JH1</strain>
    </source>
</reference>
<accession>A6TZL7</accession>
<comment type="function">
    <text evidence="1">Cell wall formation.</text>
</comment>
<comment type="catalytic activity">
    <reaction evidence="1">
        <text>UDP-N-acetyl-alpha-D-muramate + NADP(+) = UDP-N-acetyl-3-O-(1-carboxyvinyl)-alpha-D-glucosamine + NADPH + H(+)</text>
        <dbReference type="Rhea" id="RHEA:12248"/>
        <dbReference type="ChEBI" id="CHEBI:15378"/>
        <dbReference type="ChEBI" id="CHEBI:57783"/>
        <dbReference type="ChEBI" id="CHEBI:58349"/>
        <dbReference type="ChEBI" id="CHEBI:68483"/>
        <dbReference type="ChEBI" id="CHEBI:70757"/>
        <dbReference type="EC" id="1.3.1.98"/>
    </reaction>
</comment>
<comment type="cofactor">
    <cofactor evidence="1">
        <name>FAD</name>
        <dbReference type="ChEBI" id="CHEBI:57692"/>
    </cofactor>
</comment>
<comment type="pathway">
    <text evidence="1">Cell wall biogenesis; peptidoglycan biosynthesis.</text>
</comment>
<comment type="subcellular location">
    <subcellularLocation>
        <location evidence="1">Cytoplasm</location>
    </subcellularLocation>
</comment>
<comment type="similarity">
    <text evidence="1">Belongs to the MurB family.</text>
</comment>
<name>MURB_STAA2</name>
<evidence type="ECO:0000255" key="1">
    <source>
        <dbReference type="HAMAP-Rule" id="MF_00037"/>
    </source>
</evidence>
<keyword id="KW-0131">Cell cycle</keyword>
<keyword id="KW-0132">Cell division</keyword>
<keyword id="KW-0133">Cell shape</keyword>
<keyword id="KW-0961">Cell wall biogenesis/degradation</keyword>
<keyword id="KW-0963">Cytoplasm</keyword>
<keyword id="KW-0274">FAD</keyword>
<keyword id="KW-0285">Flavoprotein</keyword>
<keyword id="KW-0521">NADP</keyword>
<keyword id="KW-0560">Oxidoreductase</keyword>
<keyword id="KW-0573">Peptidoglycan synthesis</keyword>
<sequence>MINKDIYQALQQLIPNEKIKVDEPLKRYTYTKTGGNADFYITPTKNEEVQAVVKYAYQNEIPVTYLGNGSNIIIREGGIRGIVISLLSLDHIDVSDDAIIAGSGAAIIDVSRVARDYALTGLEFACGIPGSIGGAVYMNAGAYGGEVKDCIDYALCVNEQGSLIKLTTKELELDYRNSIIQKEHLVVLEAAFTLAPGKMTEIQAKMDDLTERRESKQPLEYPSCGSVFQRPPGHFAGKLIQDSNLQGHRIGGVEVSTKHAGFMVNVDNGTATDYENLIHYVQKTVKEKFGIELNREVRIIGEHPKES</sequence>
<protein>
    <recommendedName>
        <fullName evidence="1">UDP-N-acetylenolpyruvoylglucosamine reductase</fullName>
        <ecNumber evidence="1">1.3.1.98</ecNumber>
    </recommendedName>
    <alternativeName>
        <fullName evidence="1">UDP-N-acetylmuramate dehydrogenase</fullName>
    </alternativeName>
</protein>
<proteinExistence type="inferred from homology"/>
<dbReference type="EC" id="1.3.1.98" evidence="1"/>
<dbReference type="EMBL" id="CP000736">
    <property type="protein sequence ID" value="ABR51635.1"/>
    <property type="molecule type" value="Genomic_DNA"/>
</dbReference>
<dbReference type="SMR" id="A6TZL7"/>
<dbReference type="KEGG" id="sah:SaurJH1_0779"/>
<dbReference type="HOGENOM" id="CLU_035304_1_1_9"/>
<dbReference type="UniPathway" id="UPA00219"/>
<dbReference type="GO" id="GO:0005829">
    <property type="term" value="C:cytosol"/>
    <property type="evidence" value="ECO:0007669"/>
    <property type="project" value="TreeGrafter"/>
</dbReference>
<dbReference type="GO" id="GO:0071949">
    <property type="term" value="F:FAD binding"/>
    <property type="evidence" value="ECO:0007669"/>
    <property type="project" value="InterPro"/>
</dbReference>
<dbReference type="GO" id="GO:0008762">
    <property type="term" value="F:UDP-N-acetylmuramate dehydrogenase activity"/>
    <property type="evidence" value="ECO:0007669"/>
    <property type="project" value="UniProtKB-UniRule"/>
</dbReference>
<dbReference type="GO" id="GO:0051301">
    <property type="term" value="P:cell division"/>
    <property type="evidence" value="ECO:0007669"/>
    <property type="project" value="UniProtKB-KW"/>
</dbReference>
<dbReference type="GO" id="GO:0071555">
    <property type="term" value="P:cell wall organization"/>
    <property type="evidence" value="ECO:0007669"/>
    <property type="project" value="UniProtKB-KW"/>
</dbReference>
<dbReference type="GO" id="GO:0009252">
    <property type="term" value="P:peptidoglycan biosynthetic process"/>
    <property type="evidence" value="ECO:0007669"/>
    <property type="project" value="UniProtKB-UniRule"/>
</dbReference>
<dbReference type="GO" id="GO:0008360">
    <property type="term" value="P:regulation of cell shape"/>
    <property type="evidence" value="ECO:0007669"/>
    <property type="project" value="UniProtKB-KW"/>
</dbReference>
<dbReference type="FunFam" id="3.90.78.10:FF:000001">
    <property type="entry name" value="UDP-N-acetylenolpyruvoylglucosamine reductase"/>
    <property type="match status" value="1"/>
</dbReference>
<dbReference type="Gene3D" id="3.30.465.10">
    <property type="match status" value="1"/>
</dbReference>
<dbReference type="Gene3D" id="3.90.78.10">
    <property type="entry name" value="UDP-N-acetylenolpyruvoylglucosamine reductase, C-terminal domain"/>
    <property type="match status" value="1"/>
</dbReference>
<dbReference type="Gene3D" id="3.30.43.10">
    <property type="entry name" value="Uridine Diphospho-n-acetylenolpyruvylglucosamine Reductase, domain 2"/>
    <property type="match status" value="1"/>
</dbReference>
<dbReference type="HAMAP" id="MF_00037">
    <property type="entry name" value="MurB"/>
    <property type="match status" value="1"/>
</dbReference>
<dbReference type="InterPro" id="IPR016166">
    <property type="entry name" value="FAD-bd_PCMH"/>
</dbReference>
<dbReference type="InterPro" id="IPR036318">
    <property type="entry name" value="FAD-bd_PCMH-like_sf"/>
</dbReference>
<dbReference type="InterPro" id="IPR016167">
    <property type="entry name" value="FAD-bd_PCMH_sub1"/>
</dbReference>
<dbReference type="InterPro" id="IPR016169">
    <property type="entry name" value="FAD-bd_PCMH_sub2"/>
</dbReference>
<dbReference type="InterPro" id="IPR003170">
    <property type="entry name" value="MurB"/>
</dbReference>
<dbReference type="InterPro" id="IPR011601">
    <property type="entry name" value="MurB_C"/>
</dbReference>
<dbReference type="InterPro" id="IPR036635">
    <property type="entry name" value="MurB_C_sf"/>
</dbReference>
<dbReference type="InterPro" id="IPR006094">
    <property type="entry name" value="Oxid_FAD_bind_N"/>
</dbReference>
<dbReference type="NCBIfam" id="TIGR00179">
    <property type="entry name" value="murB"/>
    <property type="match status" value="1"/>
</dbReference>
<dbReference type="NCBIfam" id="NF010480">
    <property type="entry name" value="PRK13905.1"/>
    <property type="match status" value="1"/>
</dbReference>
<dbReference type="PANTHER" id="PTHR21071">
    <property type="entry name" value="UDP-N-ACETYLENOLPYRUVOYLGLUCOSAMINE REDUCTASE"/>
    <property type="match status" value="1"/>
</dbReference>
<dbReference type="PANTHER" id="PTHR21071:SF4">
    <property type="entry name" value="UDP-N-ACETYLENOLPYRUVOYLGLUCOSAMINE REDUCTASE"/>
    <property type="match status" value="1"/>
</dbReference>
<dbReference type="Pfam" id="PF01565">
    <property type="entry name" value="FAD_binding_4"/>
    <property type="match status" value="1"/>
</dbReference>
<dbReference type="Pfam" id="PF02873">
    <property type="entry name" value="MurB_C"/>
    <property type="match status" value="1"/>
</dbReference>
<dbReference type="SUPFAM" id="SSF56176">
    <property type="entry name" value="FAD-binding/transporter-associated domain-like"/>
    <property type="match status" value="1"/>
</dbReference>
<dbReference type="SUPFAM" id="SSF56194">
    <property type="entry name" value="Uridine diphospho-N-Acetylenolpyruvylglucosamine reductase, MurB, C-terminal domain"/>
    <property type="match status" value="1"/>
</dbReference>
<dbReference type="PROSITE" id="PS51387">
    <property type="entry name" value="FAD_PCMH"/>
    <property type="match status" value="1"/>
</dbReference>
<gene>
    <name evidence="1" type="primary">murB</name>
    <name type="ordered locus">SaurJH1_0779</name>
</gene>
<organism>
    <name type="scientific">Staphylococcus aureus (strain JH1)</name>
    <dbReference type="NCBI Taxonomy" id="359787"/>
    <lineage>
        <taxon>Bacteria</taxon>
        <taxon>Bacillati</taxon>
        <taxon>Bacillota</taxon>
        <taxon>Bacilli</taxon>
        <taxon>Bacillales</taxon>
        <taxon>Staphylococcaceae</taxon>
        <taxon>Staphylococcus</taxon>
    </lineage>
</organism>